<comment type="function">
    <text>Involved in mitomycin resistance. May operate with McrA or may be a type of transcriptional activator protein.</text>
</comment>
<keyword id="KW-0046">Antibiotic resistance</keyword>
<gene>
    <name type="primary">mcrB</name>
</gene>
<accession>P43486</accession>
<protein>
    <recommendedName>
        <fullName>Mitomycin resistance protein McrB</fullName>
    </recommendedName>
</protein>
<feature type="chain" id="PRO_0000096304" description="Mitomycin resistance protein McrB">
    <location>
        <begin position="1"/>
        <end position="105"/>
    </location>
</feature>
<proteinExistence type="predicted"/>
<reference key="1">
    <citation type="journal article" date="1994" name="J. Bacteriol.">
        <title>Cloning and analysis of a locus (mcr) involved in mitomycin C resistance in Streptomyces lavendulae.</title>
        <authorList>
            <person name="August P.R."/>
            <person name="Flickinger M.C."/>
            <person name="Sherman D.H."/>
        </authorList>
    </citation>
    <scope>NUCLEOTIDE SEQUENCE [GENOMIC DNA]</scope>
    <source>
        <strain>B619</strain>
    </source>
</reference>
<sequence length="105" mass="11536">MTSSDGSDLTTLVNVGRSVARYFERIGITEIAQLRDRDPVELYERMSAAFGQRLDPCLLDTVMSAVDQAEGLPARPWWHYTPERKRLLAGEGHDRAGGTAGEGTA</sequence>
<dbReference type="EMBL" id="L29247">
    <property type="protein sequence ID" value="AAA21477.1"/>
    <property type="molecule type" value="Genomic_DNA"/>
</dbReference>
<dbReference type="PIR" id="B55519">
    <property type="entry name" value="B55519"/>
</dbReference>
<dbReference type="SMR" id="P43486"/>
<dbReference type="GO" id="GO:0046677">
    <property type="term" value="P:response to antibiotic"/>
    <property type="evidence" value="ECO:0007669"/>
    <property type="project" value="UniProtKB-KW"/>
</dbReference>
<dbReference type="Gene3D" id="1.10.150.20">
    <property type="entry name" value="5' to 3' exonuclease, C-terminal subdomain"/>
    <property type="match status" value="1"/>
</dbReference>
<dbReference type="InterPro" id="IPR021725">
    <property type="entry name" value="Cdd1"/>
</dbReference>
<dbReference type="Pfam" id="PF11731">
    <property type="entry name" value="Cdd1"/>
    <property type="match status" value="1"/>
</dbReference>
<name>MCRB_STRLA</name>
<organism>
    <name type="scientific">Streptomyces lavendulae</name>
    <dbReference type="NCBI Taxonomy" id="1914"/>
    <lineage>
        <taxon>Bacteria</taxon>
        <taxon>Bacillati</taxon>
        <taxon>Actinomycetota</taxon>
        <taxon>Actinomycetes</taxon>
        <taxon>Kitasatosporales</taxon>
        <taxon>Streptomycetaceae</taxon>
        <taxon>Streptomyces</taxon>
    </lineage>
</organism>